<accession>A3MQB0</accession>
<feature type="chain" id="PRO_1000011106" description="Phosphopantetheine adenylyltransferase">
    <location>
        <begin position="1"/>
        <end position="166"/>
    </location>
</feature>
<feature type="binding site" evidence="1">
    <location>
        <begin position="9"/>
        <end position="10"/>
    </location>
    <ligand>
        <name>ATP</name>
        <dbReference type="ChEBI" id="CHEBI:30616"/>
    </ligand>
</feature>
<feature type="binding site" evidence="1">
    <location>
        <position position="9"/>
    </location>
    <ligand>
        <name>substrate</name>
    </ligand>
</feature>
<feature type="binding site" evidence="1">
    <location>
        <position position="17"/>
    </location>
    <ligand>
        <name>ATP</name>
        <dbReference type="ChEBI" id="CHEBI:30616"/>
    </ligand>
</feature>
<feature type="binding site" evidence="1">
    <location>
        <position position="41"/>
    </location>
    <ligand>
        <name>substrate</name>
    </ligand>
</feature>
<feature type="binding site" evidence="1">
    <location>
        <position position="73"/>
    </location>
    <ligand>
        <name>substrate</name>
    </ligand>
</feature>
<feature type="binding site" evidence="1">
    <location>
        <position position="87"/>
    </location>
    <ligand>
        <name>substrate</name>
    </ligand>
</feature>
<feature type="binding site" evidence="1">
    <location>
        <begin position="88"/>
        <end position="90"/>
    </location>
    <ligand>
        <name>ATP</name>
        <dbReference type="ChEBI" id="CHEBI:30616"/>
    </ligand>
</feature>
<feature type="binding site" evidence="1">
    <location>
        <position position="98"/>
    </location>
    <ligand>
        <name>ATP</name>
        <dbReference type="ChEBI" id="CHEBI:30616"/>
    </ligand>
</feature>
<feature type="binding site" evidence="1">
    <location>
        <begin position="123"/>
        <end position="129"/>
    </location>
    <ligand>
        <name>ATP</name>
        <dbReference type="ChEBI" id="CHEBI:30616"/>
    </ligand>
</feature>
<feature type="site" description="Transition state stabilizer" evidence="1">
    <location>
        <position position="17"/>
    </location>
</feature>
<comment type="function">
    <text evidence="1">Reversibly transfers an adenylyl group from ATP to 4'-phosphopantetheine, yielding dephospho-CoA (dPCoA) and pyrophosphate.</text>
</comment>
<comment type="catalytic activity">
    <reaction evidence="1">
        <text>(R)-4'-phosphopantetheine + ATP + H(+) = 3'-dephospho-CoA + diphosphate</text>
        <dbReference type="Rhea" id="RHEA:19801"/>
        <dbReference type="ChEBI" id="CHEBI:15378"/>
        <dbReference type="ChEBI" id="CHEBI:30616"/>
        <dbReference type="ChEBI" id="CHEBI:33019"/>
        <dbReference type="ChEBI" id="CHEBI:57328"/>
        <dbReference type="ChEBI" id="CHEBI:61723"/>
        <dbReference type="EC" id="2.7.7.3"/>
    </reaction>
</comment>
<comment type="cofactor">
    <cofactor evidence="1">
        <name>Mg(2+)</name>
        <dbReference type="ChEBI" id="CHEBI:18420"/>
    </cofactor>
</comment>
<comment type="pathway">
    <text evidence="1">Cofactor biosynthesis; coenzyme A biosynthesis; CoA from (R)-pantothenate: step 4/5.</text>
</comment>
<comment type="subunit">
    <text evidence="1">Homohexamer.</text>
</comment>
<comment type="subcellular location">
    <subcellularLocation>
        <location evidence="1">Cytoplasm</location>
    </subcellularLocation>
</comment>
<comment type="similarity">
    <text evidence="1">Belongs to the bacterial CoaD family.</text>
</comment>
<proteinExistence type="inferred from homology"/>
<evidence type="ECO:0000255" key="1">
    <source>
        <dbReference type="HAMAP-Rule" id="MF_00151"/>
    </source>
</evidence>
<reference key="1">
    <citation type="journal article" date="2010" name="Genome Biol. Evol.">
        <title>Continuing evolution of Burkholderia mallei through genome reduction and large-scale rearrangements.</title>
        <authorList>
            <person name="Losada L."/>
            <person name="Ronning C.M."/>
            <person name="DeShazer D."/>
            <person name="Woods D."/>
            <person name="Fedorova N."/>
            <person name="Kim H.S."/>
            <person name="Shabalina S.A."/>
            <person name="Pearson T.R."/>
            <person name="Brinkac L."/>
            <person name="Tan P."/>
            <person name="Nandi T."/>
            <person name="Crabtree J."/>
            <person name="Badger J."/>
            <person name="Beckstrom-Sternberg S."/>
            <person name="Saqib M."/>
            <person name="Schutzer S.E."/>
            <person name="Keim P."/>
            <person name="Nierman W.C."/>
        </authorList>
    </citation>
    <scope>NUCLEOTIDE SEQUENCE [LARGE SCALE GENOMIC DNA]</scope>
    <source>
        <strain>NCTC 10247</strain>
    </source>
</reference>
<keyword id="KW-0067">ATP-binding</keyword>
<keyword id="KW-0173">Coenzyme A biosynthesis</keyword>
<keyword id="KW-0963">Cytoplasm</keyword>
<keyword id="KW-0460">Magnesium</keyword>
<keyword id="KW-0547">Nucleotide-binding</keyword>
<keyword id="KW-0548">Nucleotidyltransferase</keyword>
<keyword id="KW-0808">Transferase</keyword>
<dbReference type="EC" id="2.7.7.3" evidence="1"/>
<dbReference type="EMBL" id="CP000548">
    <property type="protein sequence ID" value="ABO05035.1"/>
    <property type="molecule type" value="Genomic_DNA"/>
</dbReference>
<dbReference type="RefSeq" id="WP_004195249.1">
    <property type="nucleotide sequence ID" value="NZ_CP007802.1"/>
</dbReference>
<dbReference type="SMR" id="A3MQB0"/>
<dbReference type="GeneID" id="93059037"/>
<dbReference type="KEGG" id="bmaz:BM44_421"/>
<dbReference type="KEGG" id="bmn:BMA10247_2925"/>
<dbReference type="PATRIC" id="fig|320389.8.peg.462"/>
<dbReference type="UniPathway" id="UPA00241">
    <property type="reaction ID" value="UER00355"/>
</dbReference>
<dbReference type="GO" id="GO:0005737">
    <property type="term" value="C:cytoplasm"/>
    <property type="evidence" value="ECO:0007669"/>
    <property type="project" value="UniProtKB-SubCell"/>
</dbReference>
<dbReference type="GO" id="GO:0005524">
    <property type="term" value="F:ATP binding"/>
    <property type="evidence" value="ECO:0007669"/>
    <property type="project" value="UniProtKB-KW"/>
</dbReference>
<dbReference type="GO" id="GO:0004595">
    <property type="term" value="F:pantetheine-phosphate adenylyltransferase activity"/>
    <property type="evidence" value="ECO:0007669"/>
    <property type="project" value="UniProtKB-UniRule"/>
</dbReference>
<dbReference type="GO" id="GO:0015937">
    <property type="term" value="P:coenzyme A biosynthetic process"/>
    <property type="evidence" value="ECO:0007669"/>
    <property type="project" value="UniProtKB-UniRule"/>
</dbReference>
<dbReference type="CDD" id="cd02163">
    <property type="entry name" value="PPAT"/>
    <property type="match status" value="1"/>
</dbReference>
<dbReference type="Gene3D" id="3.40.50.620">
    <property type="entry name" value="HUPs"/>
    <property type="match status" value="1"/>
</dbReference>
<dbReference type="HAMAP" id="MF_00151">
    <property type="entry name" value="PPAT_bact"/>
    <property type="match status" value="1"/>
</dbReference>
<dbReference type="InterPro" id="IPR004821">
    <property type="entry name" value="Cyt_trans-like"/>
</dbReference>
<dbReference type="InterPro" id="IPR001980">
    <property type="entry name" value="PPAT"/>
</dbReference>
<dbReference type="InterPro" id="IPR014729">
    <property type="entry name" value="Rossmann-like_a/b/a_fold"/>
</dbReference>
<dbReference type="NCBIfam" id="TIGR01510">
    <property type="entry name" value="coaD_prev_kdtB"/>
    <property type="match status" value="1"/>
</dbReference>
<dbReference type="NCBIfam" id="TIGR00125">
    <property type="entry name" value="cyt_tran_rel"/>
    <property type="match status" value="1"/>
</dbReference>
<dbReference type="PANTHER" id="PTHR21342">
    <property type="entry name" value="PHOSPHOPANTETHEINE ADENYLYLTRANSFERASE"/>
    <property type="match status" value="1"/>
</dbReference>
<dbReference type="PANTHER" id="PTHR21342:SF1">
    <property type="entry name" value="PHOSPHOPANTETHEINE ADENYLYLTRANSFERASE"/>
    <property type="match status" value="1"/>
</dbReference>
<dbReference type="Pfam" id="PF01467">
    <property type="entry name" value="CTP_transf_like"/>
    <property type="match status" value="1"/>
</dbReference>
<dbReference type="PRINTS" id="PR01020">
    <property type="entry name" value="LPSBIOSNTHSS"/>
</dbReference>
<dbReference type="SUPFAM" id="SSF52374">
    <property type="entry name" value="Nucleotidylyl transferase"/>
    <property type="match status" value="1"/>
</dbReference>
<gene>
    <name evidence="1" type="primary">coaD</name>
    <name type="ordered locus">BMA10247_2925</name>
</gene>
<organism>
    <name type="scientific">Burkholderia mallei (strain NCTC 10247)</name>
    <dbReference type="NCBI Taxonomy" id="320389"/>
    <lineage>
        <taxon>Bacteria</taxon>
        <taxon>Pseudomonadati</taxon>
        <taxon>Pseudomonadota</taxon>
        <taxon>Betaproteobacteria</taxon>
        <taxon>Burkholderiales</taxon>
        <taxon>Burkholderiaceae</taxon>
        <taxon>Burkholderia</taxon>
        <taxon>pseudomallei group</taxon>
    </lineage>
</organism>
<protein>
    <recommendedName>
        <fullName evidence="1">Phosphopantetheine adenylyltransferase</fullName>
        <ecNumber evidence="1">2.7.7.3</ecNumber>
    </recommendedName>
    <alternativeName>
        <fullName evidence="1">Dephospho-CoA pyrophosphorylase</fullName>
    </alternativeName>
    <alternativeName>
        <fullName evidence="1">Pantetheine-phosphate adenylyltransferase</fullName>
        <shortName evidence="1">PPAT</shortName>
    </alternativeName>
</protein>
<name>COAD_BURM7</name>
<sequence>MVVAVYPGTFDPLTRGHEDLVRRASSIFDTLVVGVADSRAKKPFFSLEERLKIANEVLGHYPNVKVMGFTGLLKDFVRANDARVIVRGLRAVSDFEYEFQMAGMNRYLLPDVETMFMTPSDQYQFISGTIVREIAQLGGDVSKFVFPSVEKWLTEKVAAMAQGPSA</sequence>